<evidence type="ECO:0000255" key="1">
    <source>
        <dbReference type="HAMAP-Rule" id="MF_00009"/>
    </source>
</evidence>
<keyword id="KW-0963">Cytoplasm</keyword>
<keyword id="KW-0255">Endonuclease</keyword>
<keyword id="KW-0378">Hydrolase</keyword>
<keyword id="KW-0479">Metal-binding</keyword>
<keyword id="KW-0540">Nuclease</keyword>
<keyword id="KW-0690">Ribosome biogenesis</keyword>
<keyword id="KW-0698">rRNA processing</keyword>
<keyword id="KW-0862">Zinc</keyword>
<gene>
    <name evidence="1" type="primary">ybeY</name>
    <name type="ordered locus">SMGWSS_025</name>
</gene>
<accession>A8Z5Q5</accession>
<reference key="1">
    <citation type="journal article" date="2007" name="Proc. Natl. Acad. Sci. U.S.A.">
        <title>Parallel genomic evolution and metabolic interdependence in an ancient symbiosis.</title>
        <authorList>
            <person name="McCutcheon J.P."/>
            <person name="Moran N.A."/>
        </authorList>
    </citation>
    <scope>NUCLEOTIDE SEQUENCE [LARGE SCALE GENOMIC DNA]</scope>
    <source>
        <strain>GWSS</strain>
    </source>
</reference>
<dbReference type="EC" id="3.1.-.-" evidence="1"/>
<dbReference type="EMBL" id="CP000770">
    <property type="protein sequence ID" value="ABS30455.1"/>
    <property type="molecule type" value="Genomic_DNA"/>
</dbReference>
<dbReference type="SMR" id="A8Z5Q5"/>
<dbReference type="STRING" id="444179.SMGWSS_025"/>
<dbReference type="KEGG" id="smg:SMGWSS_025"/>
<dbReference type="HOGENOM" id="CLU_106710_3_3_10"/>
<dbReference type="Proteomes" id="UP000000781">
    <property type="component" value="Chromosome"/>
</dbReference>
<dbReference type="GO" id="GO:0005737">
    <property type="term" value="C:cytoplasm"/>
    <property type="evidence" value="ECO:0007669"/>
    <property type="project" value="UniProtKB-SubCell"/>
</dbReference>
<dbReference type="GO" id="GO:0004222">
    <property type="term" value="F:metalloendopeptidase activity"/>
    <property type="evidence" value="ECO:0007669"/>
    <property type="project" value="InterPro"/>
</dbReference>
<dbReference type="GO" id="GO:0004521">
    <property type="term" value="F:RNA endonuclease activity"/>
    <property type="evidence" value="ECO:0007669"/>
    <property type="project" value="UniProtKB-UniRule"/>
</dbReference>
<dbReference type="GO" id="GO:0008270">
    <property type="term" value="F:zinc ion binding"/>
    <property type="evidence" value="ECO:0007669"/>
    <property type="project" value="UniProtKB-UniRule"/>
</dbReference>
<dbReference type="GO" id="GO:0006364">
    <property type="term" value="P:rRNA processing"/>
    <property type="evidence" value="ECO:0007669"/>
    <property type="project" value="UniProtKB-UniRule"/>
</dbReference>
<dbReference type="Gene3D" id="3.40.390.30">
    <property type="entry name" value="Metalloproteases ('zincins'), catalytic domain"/>
    <property type="match status" value="1"/>
</dbReference>
<dbReference type="HAMAP" id="MF_00009">
    <property type="entry name" value="Endoribonucl_YbeY"/>
    <property type="match status" value="1"/>
</dbReference>
<dbReference type="InterPro" id="IPR023091">
    <property type="entry name" value="MetalPrtase_cat_dom_sf_prd"/>
</dbReference>
<dbReference type="InterPro" id="IPR002036">
    <property type="entry name" value="YbeY"/>
</dbReference>
<dbReference type="InterPro" id="IPR020549">
    <property type="entry name" value="YbeY_CS"/>
</dbReference>
<dbReference type="NCBIfam" id="TIGR00043">
    <property type="entry name" value="rRNA maturation RNase YbeY"/>
    <property type="match status" value="1"/>
</dbReference>
<dbReference type="PANTHER" id="PTHR46986">
    <property type="entry name" value="ENDORIBONUCLEASE YBEY, CHLOROPLASTIC"/>
    <property type="match status" value="1"/>
</dbReference>
<dbReference type="PANTHER" id="PTHR46986:SF1">
    <property type="entry name" value="ENDORIBONUCLEASE YBEY, CHLOROPLASTIC"/>
    <property type="match status" value="1"/>
</dbReference>
<dbReference type="Pfam" id="PF02130">
    <property type="entry name" value="YbeY"/>
    <property type="match status" value="1"/>
</dbReference>
<dbReference type="SUPFAM" id="SSF55486">
    <property type="entry name" value="Metalloproteases ('zincins'), catalytic domain"/>
    <property type="match status" value="1"/>
</dbReference>
<dbReference type="PROSITE" id="PS01306">
    <property type="entry name" value="UPF0054"/>
    <property type="match status" value="1"/>
</dbReference>
<sequence length="141" mass="17538">MINYYYETKFHLYNEFYFSKWIFFVVSKENKFIKELNFIFCDDQYLININNKYLNKNYYTDVITFDNSEDKNLDGDIFISIKRIKYNSLKFKKLFYDELKRVIIHAVLHLIGYKDKKETEKYIMSKKEDIYLFFLKKKYVC</sequence>
<protein>
    <recommendedName>
        <fullName evidence="1">Endoribonuclease YbeY</fullName>
        <ecNumber evidence="1">3.1.-.-</ecNumber>
    </recommendedName>
</protein>
<comment type="function">
    <text evidence="1">Single strand-specific metallo-endoribonuclease involved in late-stage 70S ribosome quality control and in maturation of the 3' terminus of the 16S rRNA.</text>
</comment>
<comment type="cofactor">
    <cofactor evidence="1">
        <name>Zn(2+)</name>
        <dbReference type="ChEBI" id="CHEBI:29105"/>
    </cofactor>
    <text evidence="1">Binds 1 zinc ion.</text>
</comment>
<comment type="subcellular location">
    <subcellularLocation>
        <location evidence="1">Cytoplasm</location>
    </subcellularLocation>
</comment>
<comment type="similarity">
    <text evidence="1">Belongs to the endoribonuclease YbeY family.</text>
</comment>
<organism>
    <name type="scientific">Karelsulcia muelleri (strain GWSS)</name>
    <name type="common">Sulcia muelleri</name>
    <dbReference type="NCBI Taxonomy" id="444179"/>
    <lineage>
        <taxon>Bacteria</taxon>
        <taxon>Pseudomonadati</taxon>
        <taxon>Bacteroidota</taxon>
        <taxon>Flavobacteriia</taxon>
        <taxon>Flavobacteriales</taxon>
        <taxon>Candidatus Karelsulcia</taxon>
    </lineage>
</organism>
<feature type="chain" id="PRO_0000321785" description="Endoribonuclease YbeY">
    <location>
        <begin position="1"/>
        <end position="141"/>
    </location>
</feature>
<feature type="binding site" evidence="1">
    <location>
        <position position="105"/>
    </location>
    <ligand>
        <name>Zn(2+)</name>
        <dbReference type="ChEBI" id="CHEBI:29105"/>
        <note>catalytic</note>
    </ligand>
</feature>
<feature type="binding site" evidence="1">
    <location>
        <position position="109"/>
    </location>
    <ligand>
        <name>Zn(2+)</name>
        <dbReference type="ChEBI" id="CHEBI:29105"/>
        <note>catalytic</note>
    </ligand>
</feature>
<feature type="binding site" evidence="1">
    <location>
        <position position="115"/>
    </location>
    <ligand>
        <name>Zn(2+)</name>
        <dbReference type="ChEBI" id="CHEBI:29105"/>
        <note>catalytic</note>
    </ligand>
</feature>
<name>YBEY_KARMG</name>
<proteinExistence type="inferred from homology"/>